<accession>Q1WT53</accession>
<organism>
    <name type="scientific">Ligilactobacillus salivarius (strain UCC118)</name>
    <name type="common">Lactobacillus salivarius</name>
    <dbReference type="NCBI Taxonomy" id="362948"/>
    <lineage>
        <taxon>Bacteria</taxon>
        <taxon>Bacillati</taxon>
        <taxon>Bacillota</taxon>
        <taxon>Bacilli</taxon>
        <taxon>Lactobacillales</taxon>
        <taxon>Lactobacillaceae</taxon>
        <taxon>Ligilactobacillus</taxon>
    </lineage>
</organism>
<feature type="chain" id="PRO_0000329353" description="Adenine phosphoribosyltransferase">
    <location>
        <begin position="1"/>
        <end position="172"/>
    </location>
</feature>
<sequence>MALDLRNYIASIENYPEEGIVFRDISPLMADGEAYRQATDRIVQFAKDKGVEMIVGPEARGFIVGCPVAYELGVGFAPARKKGKLPRETVKADYSLEYGTASLYMHKDAVKPGQKVLVTDDLLATGGTIGATIDLVEQLGGVVVGCAFIIELEDLHGRDKIKGYDTLALMKY</sequence>
<name>APT_LIGS1</name>
<comment type="function">
    <text evidence="1">Catalyzes a salvage reaction resulting in the formation of AMP, that is energically less costly than de novo synthesis.</text>
</comment>
<comment type="catalytic activity">
    <reaction evidence="1">
        <text>AMP + diphosphate = 5-phospho-alpha-D-ribose 1-diphosphate + adenine</text>
        <dbReference type="Rhea" id="RHEA:16609"/>
        <dbReference type="ChEBI" id="CHEBI:16708"/>
        <dbReference type="ChEBI" id="CHEBI:33019"/>
        <dbReference type="ChEBI" id="CHEBI:58017"/>
        <dbReference type="ChEBI" id="CHEBI:456215"/>
        <dbReference type="EC" id="2.4.2.7"/>
    </reaction>
</comment>
<comment type="pathway">
    <text evidence="1">Purine metabolism; AMP biosynthesis via salvage pathway; AMP from adenine: step 1/1.</text>
</comment>
<comment type="subunit">
    <text evidence="1">Homodimer.</text>
</comment>
<comment type="subcellular location">
    <subcellularLocation>
        <location evidence="1">Cytoplasm</location>
    </subcellularLocation>
</comment>
<comment type="similarity">
    <text evidence="1">Belongs to the purine/pyrimidine phosphoribosyltransferase family.</text>
</comment>
<protein>
    <recommendedName>
        <fullName evidence="1">Adenine phosphoribosyltransferase</fullName>
        <shortName evidence="1">APRT</shortName>
        <ecNumber evidence="1">2.4.2.7</ecNumber>
    </recommendedName>
</protein>
<dbReference type="EC" id="2.4.2.7" evidence="1"/>
<dbReference type="EMBL" id="CP000233">
    <property type="protein sequence ID" value="ABD99898.1"/>
    <property type="molecule type" value="Genomic_DNA"/>
</dbReference>
<dbReference type="RefSeq" id="WP_003700501.1">
    <property type="nucleotide sequence ID" value="NC_007929.1"/>
</dbReference>
<dbReference type="RefSeq" id="YP_535981.1">
    <property type="nucleotide sequence ID" value="NC_007929.1"/>
</dbReference>
<dbReference type="SMR" id="Q1WT53"/>
<dbReference type="STRING" id="362948.LSL_1090"/>
<dbReference type="KEGG" id="lsl:LSL_1090"/>
<dbReference type="PATRIC" id="fig|362948.14.peg.1162"/>
<dbReference type="HOGENOM" id="CLU_063339_3_0_9"/>
<dbReference type="OrthoDB" id="9803963at2"/>
<dbReference type="UniPathway" id="UPA00588">
    <property type="reaction ID" value="UER00646"/>
</dbReference>
<dbReference type="Proteomes" id="UP000006559">
    <property type="component" value="Chromosome"/>
</dbReference>
<dbReference type="GO" id="GO:0005737">
    <property type="term" value="C:cytoplasm"/>
    <property type="evidence" value="ECO:0007669"/>
    <property type="project" value="UniProtKB-SubCell"/>
</dbReference>
<dbReference type="GO" id="GO:0002055">
    <property type="term" value="F:adenine binding"/>
    <property type="evidence" value="ECO:0007669"/>
    <property type="project" value="TreeGrafter"/>
</dbReference>
<dbReference type="GO" id="GO:0003999">
    <property type="term" value="F:adenine phosphoribosyltransferase activity"/>
    <property type="evidence" value="ECO:0007669"/>
    <property type="project" value="UniProtKB-UniRule"/>
</dbReference>
<dbReference type="GO" id="GO:0016208">
    <property type="term" value="F:AMP binding"/>
    <property type="evidence" value="ECO:0007669"/>
    <property type="project" value="TreeGrafter"/>
</dbReference>
<dbReference type="GO" id="GO:0006168">
    <property type="term" value="P:adenine salvage"/>
    <property type="evidence" value="ECO:0007669"/>
    <property type="project" value="InterPro"/>
</dbReference>
<dbReference type="GO" id="GO:0044209">
    <property type="term" value="P:AMP salvage"/>
    <property type="evidence" value="ECO:0007669"/>
    <property type="project" value="UniProtKB-UniRule"/>
</dbReference>
<dbReference type="GO" id="GO:0006166">
    <property type="term" value="P:purine ribonucleoside salvage"/>
    <property type="evidence" value="ECO:0007669"/>
    <property type="project" value="UniProtKB-KW"/>
</dbReference>
<dbReference type="CDD" id="cd06223">
    <property type="entry name" value="PRTases_typeI"/>
    <property type="match status" value="1"/>
</dbReference>
<dbReference type="FunFam" id="3.40.50.2020:FF:000004">
    <property type="entry name" value="Adenine phosphoribosyltransferase"/>
    <property type="match status" value="1"/>
</dbReference>
<dbReference type="Gene3D" id="3.40.50.2020">
    <property type="match status" value="1"/>
</dbReference>
<dbReference type="HAMAP" id="MF_00004">
    <property type="entry name" value="Aden_phosphoribosyltr"/>
    <property type="match status" value="1"/>
</dbReference>
<dbReference type="InterPro" id="IPR005764">
    <property type="entry name" value="Ade_phspho_trans"/>
</dbReference>
<dbReference type="InterPro" id="IPR000836">
    <property type="entry name" value="PRibTrfase_dom"/>
</dbReference>
<dbReference type="InterPro" id="IPR029057">
    <property type="entry name" value="PRTase-like"/>
</dbReference>
<dbReference type="InterPro" id="IPR050054">
    <property type="entry name" value="UPRTase/APRTase"/>
</dbReference>
<dbReference type="NCBIfam" id="TIGR01090">
    <property type="entry name" value="apt"/>
    <property type="match status" value="1"/>
</dbReference>
<dbReference type="NCBIfam" id="NF002633">
    <property type="entry name" value="PRK02304.1-2"/>
    <property type="match status" value="1"/>
</dbReference>
<dbReference type="NCBIfam" id="NF002634">
    <property type="entry name" value="PRK02304.1-3"/>
    <property type="match status" value="1"/>
</dbReference>
<dbReference type="NCBIfam" id="NF002636">
    <property type="entry name" value="PRK02304.1-5"/>
    <property type="match status" value="1"/>
</dbReference>
<dbReference type="PANTHER" id="PTHR32315">
    <property type="entry name" value="ADENINE PHOSPHORIBOSYLTRANSFERASE"/>
    <property type="match status" value="1"/>
</dbReference>
<dbReference type="PANTHER" id="PTHR32315:SF3">
    <property type="entry name" value="ADENINE PHOSPHORIBOSYLTRANSFERASE"/>
    <property type="match status" value="1"/>
</dbReference>
<dbReference type="Pfam" id="PF00156">
    <property type="entry name" value="Pribosyltran"/>
    <property type="match status" value="1"/>
</dbReference>
<dbReference type="SUPFAM" id="SSF53271">
    <property type="entry name" value="PRTase-like"/>
    <property type="match status" value="1"/>
</dbReference>
<proteinExistence type="inferred from homology"/>
<reference key="1">
    <citation type="journal article" date="2006" name="Proc. Natl. Acad. Sci. U.S.A.">
        <title>Multireplicon genome architecture of Lactobacillus salivarius.</title>
        <authorList>
            <person name="Claesson M.J."/>
            <person name="Li Y."/>
            <person name="Leahy S."/>
            <person name="Canchaya C."/>
            <person name="van Pijkeren J.P."/>
            <person name="Cerdeno-Tarraga A.M."/>
            <person name="Parkhill J."/>
            <person name="Flynn S."/>
            <person name="O'Sullivan G.C."/>
            <person name="Collins J.K."/>
            <person name="Higgins D."/>
            <person name="Shanahan F."/>
            <person name="Fitzgerald G.F."/>
            <person name="van Sinderen D."/>
            <person name="O'Toole P.W."/>
        </authorList>
    </citation>
    <scope>NUCLEOTIDE SEQUENCE [LARGE SCALE GENOMIC DNA]</scope>
    <source>
        <strain>UCC118</strain>
    </source>
</reference>
<gene>
    <name evidence="1" type="primary">apt</name>
    <name type="ordered locus">LSL_1090</name>
</gene>
<evidence type="ECO:0000255" key="1">
    <source>
        <dbReference type="HAMAP-Rule" id="MF_00004"/>
    </source>
</evidence>
<keyword id="KW-0963">Cytoplasm</keyword>
<keyword id="KW-0328">Glycosyltransferase</keyword>
<keyword id="KW-0660">Purine salvage</keyword>
<keyword id="KW-1185">Reference proteome</keyword>
<keyword id="KW-0808">Transferase</keyword>